<name>ACCR_AGRFC</name>
<dbReference type="EMBL" id="AF010180">
    <property type="protein sequence ID" value="AAC17196.1"/>
    <property type="molecule type" value="Genomic_DNA"/>
</dbReference>
<dbReference type="EMBL" id="AE007871">
    <property type="protein sequence ID" value="AAK91102.1"/>
    <property type="molecule type" value="Genomic_DNA"/>
</dbReference>
<dbReference type="PIR" id="AH3244">
    <property type="entry name" value="AH3244"/>
</dbReference>
<dbReference type="PIR" id="T03429">
    <property type="entry name" value="T03429"/>
</dbReference>
<dbReference type="RefSeq" id="NP_396661.3">
    <property type="nucleotide sequence ID" value="NC_003065.3"/>
</dbReference>
<dbReference type="RefSeq" id="WP_010974787.1">
    <property type="nucleotide sequence ID" value="NC_003065.3"/>
</dbReference>
<dbReference type="SMR" id="P32104"/>
<dbReference type="EnsemblBacteria" id="AAK91102">
    <property type="protein sequence ID" value="AAK91102"/>
    <property type="gene ID" value="Atu6138"/>
</dbReference>
<dbReference type="GeneID" id="86882561"/>
<dbReference type="KEGG" id="atu:Atu6138"/>
<dbReference type="PATRIC" id="fig|176299.10.peg.5345"/>
<dbReference type="HOGENOM" id="CLU_060699_3_1_5"/>
<dbReference type="OrthoDB" id="31600at2"/>
<dbReference type="PhylomeDB" id="P32104"/>
<dbReference type="BioCyc" id="AGRO:ATU6138-MONOMER"/>
<dbReference type="PRO" id="PR:P32104"/>
<dbReference type="Proteomes" id="UP000000813">
    <property type="component" value="Plasmid Ti"/>
</dbReference>
<dbReference type="GO" id="GO:0003677">
    <property type="term" value="F:DNA binding"/>
    <property type="evidence" value="ECO:0007669"/>
    <property type="project" value="UniProtKB-KW"/>
</dbReference>
<dbReference type="GO" id="GO:0003700">
    <property type="term" value="F:DNA-binding transcription factor activity"/>
    <property type="evidence" value="ECO:0007669"/>
    <property type="project" value="InterPro"/>
</dbReference>
<dbReference type="Gene3D" id="3.40.50.1360">
    <property type="match status" value="1"/>
</dbReference>
<dbReference type="Gene3D" id="1.10.10.10">
    <property type="entry name" value="Winged helix-like DNA-binding domain superfamily/Winged helix DNA-binding domain"/>
    <property type="match status" value="1"/>
</dbReference>
<dbReference type="InterPro" id="IPR050313">
    <property type="entry name" value="Carb_Metab_HTH_regulators"/>
</dbReference>
<dbReference type="InterPro" id="IPR014036">
    <property type="entry name" value="DeoR-like_C"/>
</dbReference>
<dbReference type="InterPro" id="IPR001034">
    <property type="entry name" value="DeoR_HTH"/>
</dbReference>
<dbReference type="InterPro" id="IPR037171">
    <property type="entry name" value="NagB/RpiA_transferase-like"/>
</dbReference>
<dbReference type="InterPro" id="IPR018356">
    <property type="entry name" value="Tscrpt_reg_HTH_DeoR_CS"/>
</dbReference>
<dbReference type="InterPro" id="IPR036388">
    <property type="entry name" value="WH-like_DNA-bd_sf"/>
</dbReference>
<dbReference type="InterPro" id="IPR036390">
    <property type="entry name" value="WH_DNA-bd_sf"/>
</dbReference>
<dbReference type="PANTHER" id="PTHR30363:SF44">
    <property type="entry name" value="AGA OPERON TRANSCRIPTIONAL REPRESSOR-RELATED"/>
    <property type="match status" value="1"/>
</dbReference>
<dbReference type="PANTHER" id="PTHR30363">
    <property type="entry name" value="HTH-TYPE TRANSCRIPTIONAL REGULATOR SRLR-RELATED"/>
    <property type="match status" value="1"/>
</dbReference>
<dbReference type="Pfam" id="PF00455">
    <property type="entry name" value="DeoRC"/>
    <property type="match status" value="1"/>
</dbReference>
<dbReference type="Pfam" id="PF08220">
    <property type="entry name" value="HTH_DeoR"/>
    <property type="match status" value="1"/>
</dbReference>
<dbReference type="PRINTS" id="PR00037">
    <property type="entry name" value="HTHLACR"/>
</dbReference>
<dbReference type="SMART" id="SM01134">
    <property type="entry name" value="DeoRC"/>
    <property type="match status" value="1"/>
</dbReference>
<dbReference type="SMART" id="SM00420">
    <property type="entry name" value="HTH_DEOR"/>
    <property type="match status" value="1"/>
</dbReference>
<dbReference type="SUPFAM" id="SSF100950">
    <property type="entry name" value="NagB/RpiA/CoA transferase-like"/>
    <property type="match status" value="1"/>
</dbReference>
<dbReference type="SUPFAM" id="SSF46785">
    <property type="entry name" value="Winged helix' DNA-binding domain"/>
    <property type="match status" value="1"/>
</dbReference>
<dbReference type="PROSITE" id="PS00894">
    <property type="entry name" value="HTH_DEOR_1"/>
    <property type="match status" value="1"/>
</dbReference>
<dbReference type="PROSITE" id="PS51000">
    <property type="entry name" value="HTH_DEOR_2"/>
    <property type="match status" value="1"/>
</dbReference>
<sequence length="258" mass="28076">MVFNSTQDRQAKIVELLRDEQFLAIGRLTEHFQISVATARRDLSELHEAGLLRRTHGGAVSVTQVTQDKPNAARAVWNRAEKAAIAGVVAGMIVEGDTVLLDAGTTALEVAKKLADRRNLTFISNGLDIVEELTRGEGKSIYSVGGEYTETNRSFRGPLAEQFIRQFNVDKLILNAASIDVDRGLICTSSPVNASVARAMIEVSSRVIVVADHSKFTKSSLSVTARIEDVGVIVTDSGTRTIIETIPEKLRKKFVVAN</sequence>
<protein>
    <recommendedName>
        <fullName>Transcriptional repressor AccR</fullName>
    </recommendedName>
</protein>
<accession>P32104</accession>
<accession>O30540</accession>
<organism>
    <name type="scientific">Agrobacterium fabrum (strain C58 / ATCC 33970)</name>
    <name type="common">Agrobacterium tumefaciens (strain C58)</name>
    <dbReference type="NCBI Taxonomy" id="176299"/>
    <lineage>
        <taxon>Bacteria</taxon>
        <taxon>Pseudomonadati</taxon>
        <taxon>Pseudomonadota</taxon>
        <taxon>Alphaproteobacteria</taxon>
        <taxon>Hyphomicrobiales</taxon>
        <taxon>Rhizobiaceae</taxon>
        <taxon>Rhizobium/Agrobacterium group</taxon>
        <taxon>Agrobacterium</taxon>
        <taxon>Agrobacterium tumefaciens complex</taxon>
    </lineage>
</organism>
<gene>
    <name type="primary">accR</name>
    <name type="ordered locus">Atu6138</name>
    <name type="ORF">AGR_pTi_255</name>
</gene>
<comment type="function">
    <text>Represses opine catabolism and conjugal transfer of the nopaline Ti plasmid pTiC58.</text>
</comment>
<feature type="chain" id="PRO_0000050240" description="Transcriptional repressor AccR">
    <location>
        <begin position="1"/>
        <end position="258"/>
    </location>
</feature>
<feature type="domain" description="HTH deoR-type" evidence="1">
    <location>
        <begin position="6"/>
        <end position="61"/>
    </location>
</feature>
<feature type="DNA-binding region" description="H-T-H motif" evidence="1">
    <location>
        <begin position="23"/>
        <end position="42"/>
    </location>
</feature>
<keyword id="KW-0238">DNA-binding</keyword>
<keyword id="KW-0614">Plasmid</keyword>
<keyword id="KW-1185">Reference proteome</keyword>
<keyword id="KW-0678">Repressor</keyword>
<keyword id="KW-0804">Transcription</keyword>
<keyword id="KW-0805">Transcription regulation</keyword>
<proteinExistence type="predicted"/>
<evidence type="ECO:0000255" key="1">
    <source>
        <dbReference type="PROSITE-ProRule" id="PRU00349"/>
    </source>
</evidence>
<geneLocation type="plasmid">
    <name>pTiC58</name>
</geneLocation>
<reference key="1">
    <citation type="journal article" date="1992" name="Proc. Natl. Acad. Sci. U.S.A.">
        <title>Opine catabolism and conjugal transfer of the nopaline Ti plasmid pTiC58 are coordinately regulated by a single repressor.</title>
        <authorList>
            <person name="von Bodman S."/>
            <person name="Hayman G.T."/>
            <person name="Farrand S.K."/>
        </authorList>
    </citation>
    <scope>NUCLEOTIDE SEQUENCE [GENOMIC DNA]</scope>
</reference>
<reference key="2">
    <citation type="journal article" date="1997" name="J. Bacteriol.">
        <title>Characterization of the acc operon from the nopaline-type Ti plasmid pTiC58, which encodes utilization of agrocinopines A and B and susceptibility to agrocin 84.</title>
        <authorList>
            <person name="Kim H."/>
            <person name="Farrand S.K."/>
        </authorList>
    </citation>
    <scope>NUCLEOTIDE SEQUENCE [GENOMIC DNA]</scope>
</reference>
<reference key="3">
    <citation type="journal article" date="2001" name="Science">
        <title>The genome of the natural genetic engineer Agrobacterium tumefaciens C58.</title>
        <authorList>
            <person name="Wood D.W."/>
            <person name="Setubal J.C."/>
            <person name="Kaul R."/>
            <person name="Monks D.E."/>
            <person name="Kitajima J.P."/>
            <person name="Okura V.K."/>
            <person name="Zhou Y."/>
            <person name="Chen L."/>
            <person name="Wood G.E."/>
            <person name="Almeida N.F. Jr."/>
            <person name="Woo L."/>
            <person name="Chen Y."/>
            <person name="Paulsen I.T."/>
            <person name="Eisen J.A."/>
            <person name="Karp P.D."/>
            <person name="Bovee D. Sr."/>
            <person name="Chapman P."/>
            <person name="Clendenning J."/>
            <person name="Deatherage G."/>
            <person name="Gillet W."/>
            <person name="Grant C."/>
            <person name="Kutyavin T."/>
            <person name="Levy R."/>
            <person name="Li M.-J."/>
            <person name="McClelland E."/>
            <person name="Palmieri A."/>
            <person name="Raymond C."/>
            <person name="Rouse G."/>
            <person name="Saenphimmachak C."/>
            <person name="Wu Z."/>
            <person name="Romero P."/>
            <person name="Gordon D."/>
            <person name="Zhang S."/>
            <person name="Yoo H."/>
            <person name="Tao Y."/>
            <person name="Biddle P."/>
            <person name="Jung M."/>
            <person name="Krespan W."/>
            <person name="Perry M."/>
            <person name="Gordon-Kamm B."/>
            <person name="Liao L."/>
            <person name="Kim S."/>
            <person name="Hendrick C."/>
            <person name="Zhao Z.-Y."/>
            <person name="Dolan M."/>
            <person name="Chumley F."/>
            <person name="Tingey S.V."/>
            <person name="Tomb J.-F."/>
            <person name="Gordon M.P."/>
            <person name="Olson M.V."/>
            <person name="Nester E.W."/>
        </authorList>
    </citation>
    <scope>NUCLEOTIDE SEQUENCE [LARGE SCALE GENOMIC DNA]</scope>
</reference>
<reference key="4">
    <citation type="journal article" date="2001" name="Science">
        <title>Genome sequence of the plant pathogen and biotechnology agent Agrobacterium tumefaciens C58.</title>
        <authorList>
            <person name="Goodner B."/>
            <person name="Hinkle G."/>
            <person name="Gattung S."/>
            <person name="Miller N."/>
            <person name="Blanchard M."/>
            <person name="Qurollo B."/>
            <person name="Goldman B.S."/>
            <person name="Cao Y."/>
            <person name="Askenazi M."/>
            <person name="Halling C."/>
            <person name="Mullin L."/>
            <person name="Houmiel K."/>
            <person name="Gordon J."/>
            <person name="Vaudin M."/>
            <person name="Iartchouk O."/>
            <person name="Epp A."/>
            <person name="Liu F."/>
            <person name="Wollam C."/>
            <person name="Allinger M."/>
            <person name="Doughty D."/>
            <person name="Scott C."/>
            <person name="Lappas C."/>
            <person name="Markelz B."/>
            <person name="Flanagan C."/>
            <person name="Crowell C."/>
            <person name="Gurson J."/>
            <person name="Lomo C."/>
            <person name="Sear C."/>
            <person name="Strub G."/>
            <person name="Cielo C."/>
            <person name="Slater S."/>
        </authorList>
    </citation>
    <scope>NUCLEOTIDE SEQUENCE [LARGE SCALE GENOMIC DNA]</scope>
    <source>
        <strain>C58 / ATCC 33970</strain>
    </source>
</reference>